<geneLocation type="chloroplast"/>
<proteinExistence type="inferred from homology"/>
<dbReference type="EC" id="7.1.2.2" evidence="1"/>
<dbReference type="EMBL" id="EU262889">
    <property type="protein sequence ID" value="ABW98878.1"/>
    <property type="molecule type" value="Genomic_DNA"/>
</dbReference>
<dbReference type="RefSeq" id="YP_001687373.1">
    <property type="nucleotide sequence ID" value="NC_010361.1"/>
</dbReference>
<dbReference type="SMR" id="B0Z4W6"/>
<dbReference type="GeneID" id="5952070"/>
<dbReference type="GO" id="GO:0009535">
    <property type="term" value="C:chloroplast thylakoid membrane"/>
    <property type="evidence" value="ECO:0007669"/>
    <property type="project" value="UniProtKB-SubCell"/>
</dbReference>
<dbReference type="GO" id="GO:0045259">
    <property type="term" value="C:proton-transporting ATP synthase complex"/>
    <property type="evidence" value="ECO:0007669"/>
    <property type="project" value="UniProtKB-KW"/>
</dbReference>
<dbReference type="GO" id="GO:0043531">
    <property type="term" value="F:ADP binding"/>
    <property type="evidence" value="ECO:0007669"/>
    <property type="project" value="TreeGrafter"/>
</dbReference>
<dbReference type="GO" id="GO:0005524">
    <property type="term" value="F:ATP binding"/>
    <property type="evidence" value="ECO:0007669"/>
    <property type="project" value="UniProtKB-UniRule"/>
</dbReference>
<dbReference type="GO" id="GO:0046933">
    <property type="term" value="F:proton-transporting ATP synthase activity, rotational mechanism"/>
    <property type="evidence" value="ECO:0007669"/>
    <property type="project" value="UniProtKB-UniRule"/>
</dbReference>
<dbReference type="CDD" id="cd18113">
    <property type="entry name" value="ATP-synt_F1_alpha_C"/>
    <property type="match status" value="1"/>
</dbReference>
<dbReference type="CDD" id="cd18116">
    <property type="entry name" value="ATP-synt_F1_alpha_N"/>
    <property type="match status" value="1"/>
</dbReference>
<dbReference type="CDD" id="cd01132">
    <property type="entry name" value="F1-ATPase_alpha_CD"/>
    <property type="match status" value="1"/>
</dbReference>
<dbReference type="FunFam" id="1.20.150.20:FF:000001">
    <property type="entry name" value="ATP synthase subunit alpha"/>
    <property type="match status" value="1"/>
</dbReference>
<dbReference type="FunFam" id="2.40.30.20:FF:000001">
    <property type="entry name" value="ATP synthase subunit alpha"/>
    <property type="match status" value="1"/>
</dbReference>
<dbReference type="FunFam" id="3.40.50.300:FF:000002">
    <property type="entry name" value="ATP synthase subunit alpha"/>
    <property type="match status" value="1"/>
</dbReference>
<dbReference type="Gene3D" id="2.40.30.20">
    <property type="match status" value="1"/>
</dbReference>
<dbReference type="Gene3D" id="1.20.150.20">
    <property type="entry name" value="ATP synthase alpha/beta chain, C-terminal domain"/>
    <property type="match status" value="1"/>
</dbReference>
<dbReference type="Gene3D" id="3.40.50.300">
    <property type="entry name" value="P-loop containing nucleotide triphosphate hydrolases"/>
    <property type="match status" value="1"/>
</dbReference>
<dbReference type="HAMAP" id="MF_01346">
    <property type="entry name" value="ATP_synth_alpha_bact"/>
    <property type="match status" value="1"/>
</dbReference>
<dbReference type="InterPro" id="IPR023366">
    <property type="entry name" value="ATP_synth_asu-like_sf"/>
</dbReference>
<dbReference type="InterPro" id="IPR000793">
    <property type="entry name" value="ATP_synth_asu_C"/>
</dbReference>
<dbReference type="InterPro" id="IPR038376">
    <property type="entry name" value="ATP_synth_asu_C_sf"/>
</dbReference>
<dbReference type="InterPro" id="IPR033732">
    <property type="entry name" value="ATP_synth_F1_a_nt-bd_dom"/>
</dbReference>
<dbReference type="InterPro" id="IPR005294">
    <property type="entry name" value="ATP_synth_F1_asu"/>
</dbReference>
<dbReference type="InterPro" id="IPR020003">
    <property type="entry name" value="ATPase_a/bsu_AS"/>
</dbReference>
<dbReference type="InterPro" id="IPR004100">
    <property type="entry name" value="ATPase_F1/V1/A1_a/bsu_N"/>
</dbReference>
<dbReference type="InterPro" id="IPR036121">
    <property type="entry name" value="ATPase_F1/V1/A1_a/bsu_N_sf"/>
</dbReference>
<dbReference type="InterPro" id="IPR000194">
    <property type="entry name" value="ATPase_F1/V1/A1_a/bsu_nucl-bd"/>
</dbReference>
<dbReference type="InterPro" id="IPR027417">
    <property type="entry name" value="P-loop_NTPase"/>
</dbReference>
<dbReference type="NCBIfam" id="TIGR00962">
    <property type="entry name" value="atpA"/>
    <property type="match status" value="1"/>
</dbReference>
<dbReference type="NCBIfam" id="NF009884">
    <property type="entry name" value="PRK13343.1"/>
    <property type="match status" value="1"/>
</dbReference>
<dbReference type="PANTHER" id="PTHR48082">
    <property type="entry name" value="ATP SYNTHASE SUBUNIT ALPHA, MITOCHONDRIAL"/>
    <property type="match status" value="1"/>
</dbReference>
<dbReference type="PANTHER" id="PTHR48082:SF2">
    <property type="entry name" value="ATP SYNTHASE SUBUNIT ALPHA, MITOCHONDRIAL"/>
    <property type="match status" value="1"/>
</dbReference>
<dbReference type="Pfam" id="PF00006">
    <property type="entry name" value="ATP-synt_ab"/>
    <property type="match status" value="1"/>
</dbReference>
<dbReference type="Pfam" id="PF00306">
    <property type="entry name" value="ATP-synt_ab_C"/>
    <property type="match status" value="1"/>
</dbReference>
<dbReference type="Pfam" id="PF02874">
    <property type="entry name" value="ATP-synt_ab_N"/>
    <property type="match status" value="1"/>
</dbReference>
<dbReference type="PIRSF" id="PIRSF039088">
    <property type="entry name" value="F_ATPase_subunit_alpha"/>
    <property type="match status" value="1"/>
</dbReference>
<dbReference type="SUPFAM" id="SSF47917">
    <property type="entry name" value="C-terminal domain of alpha and beta subunits of F1 ATP synthase"/>
    <property type="match status" value="1"/>
</dbReference>
<dbReference type="SUPFAM" id="SSF50615">
    <property type="entry name" value="N-terminal domain of alpha and beta subunits of F1 ATP synthase"/>
    <property type="match status" value="1"/>
</dbReference>
<dbReference type="SUPFAM" id="SSF52540">
    <property type="entry name" value="P-loop containing nucleoside triphosphate hydrolases"/>
    <property type="match status" value="1"/>
</dbReference>
<dbReference type="PROSITE" id="PS00152">
    <property type="entry name" value="ATPASE_ALPHA_BETA"/>
    <property type="match status" value="1"/>
</dbReference>
<protein>
    <recommendedName>
        <fullName evidence="1">ATP synthase subunit alpha, chloroplastic</fullName>
        <ecNumber evidence="1">7.1.2.2</ecNumber>
    </recommendedName>
    <alternativeName>
        <fullName evidence="1">ATP synthase F1 sector subunit alpha</fullName>
    </alternativeName>
    <alternativeName>
        <fullName evidence="1">F-ATPase subunit alpha</fullName>
    </alternativeName>
</protein>
<sequence length="505" mass="55322">MATIRADEISNIIRERIEQYNREVKIVNTGTVLQVGDGIARIYGLDEVMAGELVEFEEGTIGIALNLESKNVGVVLMGDGLLIQEGSSVKATGRIAQIPVSEAYLGRVINALAKPIDGRGEIYSSESRLIESPAPGIISRRSVYEPLQTGLIAIDAMIPIGRGQRELIIGDRQTGKTAVATDTILNQQGNNVICVYVAIGQKASSVAQVVNALQERGAMEYTIVVAEAADSPATLQYLAPYTGAALAEYFMYRERHTLIIYDDPSKQAQAYRQMSLLLRRPPGREAYPGDVFYLHSRLLERAAKLSSRLGEGSMTALPIVETQSGDVSAYIPTNVISITDGQIFLSADLFNAGIRPAINVGISVSRVGSAAQIKAMKQVAGKLKLELAQFAELEAFAQFSSDLDKATQNQLARGQRLRELLKQSQAKPLTVAEQILTIYTGTNGYLDSFEIAQVRKFLDELRDYVKTRKPQFEEIISSTKIFTEEAQALLKDAIQEQKELFLVQE</sequence>
<comment type="function">
    <text evidence="1">Produces ATP from ADP in the presence of a proton gradient across the membrane. The alpha chain is a regulatory subunit.</text>
</comment>
<comment type="catalytic activity">
    <reaction evidence="1">
        <text>ATP + H2O + 4 H(+)(in) = ADP + phosphate + 5 H(+)(out)</text>
        <dbReference type="Rhea" id="RHEA:57720"/>
        <dbReference type="ChEBI" id="CHEBI:15377"/>
        <dbReference type="ChEBI" id="CHEBI:15378"/>
        <dbReference type="ChEBI" id="CHEBI:30616"/>
        <dbReference type="ChEBI" id="CHEBI:43474"/>
        <dbReference type="ChEBI" id="CHEBI:456216"/>
        <dbReference type="EC" id="7.1.2.2"/>
    </reaction>
</comment>
<comment type="subunit">
    <text evidence="1">F-type ATPases have 2 components, CF(1) - the catalytic core - and CF(0) - the membrane proton channel. CF(1) has five subunits: alpha(3), beta(3), gamma(1), delta(1), epsilon(1). CF(0) has four main subunits: a, b, b' and c.</text>
</comment>
<comment type="subcellular location">
    <subcellularLocation>
        <location evidence="1">Plastid</location>
        <location evidence="1">Chloroplast thylakoid membrane</location>
        <topology evidence="1">Peripheral membrane protein</topology>
    </subcellularLocation>
</comment>
<comment type="similarity">
    <text evidence="1">Belongs to the ATPase alpha/beta chains family.</text>
</comment>
<accession>B0Z4W6</accession>
<gene>
    <name evidence="1" type="primary">atpA</name>
</gene>
<evidence type="ECO:0000255" key="1">
    <source>
        <dbReference type="HAMAP-Rule" id="MF_01346"/>
    </source>
</evidence>
<organism>
    <name type="scientific">Oenothera biennis</name>
    <name type="common">German evening primrose</name>
    <name type="synonym">Onagra biennis</name>
    <dbReference type="NCBI Taxonomy" id="3942"/>
    <lineage>
        <taxon>Eukaryota</taxon>
        <taxon>Viridiplantae</taxon>
        <taxon>Streptophyta</taxon>
        <taxon>Embryophyta</taxon>
        <taxon>Tracheophyta</taxon>
        <taxon>Spermatophyta</taxon>
        <taxon>Magnoliopsida</taxon>
        <taxon>eudicotyledons</taxon>
        <taxon>Gunneridae</taxon>
        <taxon>Pentapetalae</taxon>
        <taxon>rosids</taxon>
        <taxon>malvids</taxon>
        <taxon>Myrtales</taxon>
        <taxon>Onagraceae</taxon>
        <taxon>Onagroideae</taxon>
        <taxon>Onagreae</taxon>
        <taxon>Oenothera</taxon>
    </lineage>
</organism>
<name>ATPA_OENBI</name>
<reference key="1">
    <citation type="journal article" date="2008" name="Nucleic Acids Res.">
        <title>The complete nucleotide sequences of the five genetically distinct plastid genomes of Oenothera, subsection Oenothera: I. Sequence evaluation and plastome evolution.</title>
        <authorList>
            <person name="Greiner S."/>
            <person name="Wang X."/>
            <person name="Rauwolf U."/>
            <person name="Silber M.V."/>
            <person name="Mayer K."/>
            <person name="Meurer J."/>
            <person name="Haberer G."/>
            <person name="Herrmann R.G."/>
        </authorList>
    </citation>
    <scope>NUCLEOTIDE SEQUENCE [LARGE SCALE GENOMIC DNA]</scope>
    <source>
        <strain>cv. Suaveolens Grado</strain>
    </source>
</reference>
<feature type="chain" id="PRO_0000339101" description="ATP synthase subunit alpha, chloroplastic">
    <location>
        <begin position="1"/>
        <end position="505"/>
    </location>
</feature>
<feature type="binding site" evidence="1">
    <location>
        <begin position="170"/>
        <end position="177"/>
    </location>
    <ligand>
        <name>ATP</name>
        <dbReference type="ChEBI" id="CHEBI:30616"/>
    </ligand>
</feature>
<feature type="site" description="Required for activity" evidence="1">
    <location>
        <position position="363"/>
    </location>
</feature>
<keyword id="KW-0066">ATP synthesis</keyword>
<keyword id="KW-0067">ATP-binding</keyword>
<keyword id="KW-0139">CF(1)</keyword>
<keyword id="KW-0150">Chloroplast</keyword>
<keyword id="KW-0375">Hydrogen ion transport</keyword>
<keyword id="KW-0406">Ion transport</keyword>
<keyword id="KW-0472">Membrane</keyword>
<keyword id="KW-0547">Nucleotide-binding</keyword>
<keyword id="KW-0934">Plastid</keyword>
<keyword id="KW-0793">Thylakoid</keyword>
<keyword id="KW-1278">Translocase</keyword>
<keyword id="KW-0813">Transport</keyword>